<reference key="1">
    <citation type="journal article" date="1993" name="Biochim. Biophys. Acta">
        <title>Purification, cDNA cloning and northern blot analysis of trehalase of pupal midgut of the silkworm, Bombyx mori.</title>
        <authorList>
            <person name="Su Z.-H."/>
            <person name="Sato Y."/>
            <person name="Yamashita O."/>
        </authorList>
    </citation>
    <scope>NUCLEOTIDE SEQUENCE</scope>
    <scope>PROTEIN SEQUENCE OF 16-35; 95-114 AND 289-308</scope>
    <source>
        <strain>Kinshu X Showa</strain>
        <tissue>Pupal midgut</tissue>
    </source>
</reference>
<reference key="2">
    <citation type="journal article" date="1994" name="Biochim. Biophys. Acta">
        <title>Molecular characterization of ovary trehalase of the silkworm, Bombyx mori and its transcriptional activation by diapause hormone.</title>
        <authorList>
            <person name="Su Z.-H."/>
            <person name="Ikeda M."/>
            <person name="Sato Y."/>
            <person name="Saito H."/>
            <person name="Imai K."/>
            <person name="Isobe M."/>
            <person name="Yamashita O."/>
        </authorList>
    </citation>
    <scope>NUCLEOTIDE SEQUENCE</scope>
    <source>
        <strain>Kinshu X Showa</strain>
    </source>
</reference>
<reference key="3">
    <citation type="journal article" date="1997" name="Nihon Sanshigaku Zasshi">
        <title>Structure of trehalase gene of the silkworm, Bombyx mori and phylogenic relationship of trelalases.</title>
        <authorList>
            <person name="Su Z.-H."/>
            <person name="Itani Y."/>
            <person name="Yamashita O."/>
        </authorList>
    </citation>
    <scope>NUCLEOTIDE SEQUENCE [GENOMIC DNA]</scope>
    <source>
        <tissue>Silk gland</tissue>
    </source>
</reference>
<comment type="function">
    <text>Involved in uptake of hemolymph trehalose into epithelial cells in the midgut of feeding larvae.</text>
</comment>
<comment type="catalytic activity">
    <reaction>
        <text>alpha,alpha-trehalose + H2O = alpha-D-glucose + beta-D-glucose</text>
        <dbReference type="Rhea" id="RHEA:32675"/>
        <dbReference type="ChEBI" id="CHEBI:15377"/>
        <dbReference type="ChEBI" id="CHEBI:15903"/>
        <dbReference type="ChEBI" id="CHEBI:16551"/>
        <dbReference type="ChEBI" id="CHEBI:17925"/>
        <dbReference type="EC" id="3.2.1.28"/>
    </reaction>
</comment>
<comment type="subcellular location">
    <subcellularLocation>
        <location>Basolateral cell membrane</location>
    </subcellularLocation>
</comment>
<comment type="tissue specificity">
    <text>In midgut and Malpighian tubules.</text>
</comment>
<comment type="similarity">
    <text evidence="5">Belongs to the glycosyl hydrolase 37 family.</text>
</comment>
<evidence type="ECO:0000250" key="1"/>
<evidence type="ECO:0000255" key="2"/>
<evidence type="ECO:0000256" key="3">
    <source>
        <dbReference type="SAM" id="MobiDB-lite"/>
    </source>
</evidence>
<evidence type="ECO:0000269" key="4">
    <source>
    </source>
</evidence>
<evidence type="ECO:0000305" key="5"/>
<protein>
    <recommendedName>
        <fullName>Trehalase</fullName>
        <ecNumber>3.2.1.28</ecNumber>
    </recommendedName>
    <alternativeName>
        <fullName>Alpha,alpha-trehalase</fullName>
    </alternativeName>
    <alternativeName>
        <fullName>Alpha,alpha-trehalose glucohydrolase</fullName>
    </alternativeName>
</protein>
<organism>
    <name type="scientific">Bombyx mori</name>
    <name type="common">Silk moth</name>
    <dbReference type="NCBI Taxonomy" id="7091"/>
    <lineage>
        <taxon>Eukaryota</taxon>
        <taxon>Metazoa</taxon>
        <taxon>Ecdysozoa</taxon>
        <taxon>Arthropoda</taxon>
        <taxon>Hexapoda</taxon>
        <taxon>Insecta</taxon>
        <taxon>Pterygota</taxon>
        <taxon>Neoptera</taxon>
        <taxon>Endopterygota</taxon>
        <taxon>Lepidoptera</taxon>
        <taxon>Glossata</taxon>
        <taxon>Ditrysia</taxon>
        <taxon>Bombycoidea</taxon>
        <taxon>Bombycidae</taxon>
        <taxon>Bombycinae</taxon>
        <taxon>Bombyx</taxon>
    </lineage>
</organism>
<sequence>MRLFLLLVGLTTVIADDLPPTCIRPVYCNSTLLHYVQMARLYPDSKTFVDFQMRKDENATLSAFQELLDRTNHNPTKEDLQEFVVDFFDETSELEEWKPDDHKENPPFLAKIRDQGFREFAKALNDIWPTLARRVKPSVLEKPEQSSLVPMTHGFIVPGGRFKEIYYWDAYWIIEGLLITDMTETAKGMIENLIELLYKFGHIPNGSRWYYQERSQPPLLAAMIKLYYEKTKDIEFIRKYISALEKELEYWLDTHLIAFNKDDRVYTLLRYYIPSAGPRPESYYEDYELAQKLDKNTDPNDIYADLKSAAESGWDFSTRWFISESGDNSGNLTNLNTKNVIPVDLNAIFAGALQITANFQAILKNPRRAAHWGYMAEQWRSSIEQALWDEEDGVWHDYDILNNKPRRYFYTSNLAPLWMNAVEKPFLAKHGARVLEYLHESQALEYPGGVPVSLVNSGEQWDFPNAWPPEVSIVVTAIQNIGSEESSKLAKELAQVWVRACKSGFTEKKQMFEKYDALNAGKYGGGGEYTVQDGFGWSNGVVLEFLDRYGAVLTSVDSVDASANNGQSNEESETDSKEK</sequence>
<feature type="signal peptide" evidence="4">
    <location>
        <begin position="1"/>
        <end position="15"/>
    </location>
</feature>
<feature type="chain" id="PRO_0000012057" description="Trehalase">
    <location>
        <begin position="16"/>
        <end position="579"/>
    </location>
</feature>
<feature type="region of interest" description="Disordered" evidence="3">
    <location>
        <begin position="560"/>
        <end position="579"/>
    </location>
</feature>
<feature type="compositionally biased region" description="Polar residues" evidence="3">
    <location>
        <begin position="560"/>
        <end position="569"/>
    </location>
</feature>
<feature type="active site" description="Proton donor/acceptor" evidence="1">
    <location>
        <position position="315"/>
    </location>
</feature>
<feature type="active site" description="Proton donor/acceptor" evidence="1">
    <location>
        <position position="513"/>
    </location>
</feature>
<feature type="binding site" evidence="1">
    <location>
        <position position="161"/>
    </location>
    <ligand>
        <name>substrate</name>
    </ligand>
</feature>
<feature type="binding site" evidence="1">
    <location>
        <begin position="168"/>
        <end position="169"/>
    </location>
    <ligand>
        <name>substrate</name>
    </ligand>
</feature>
<feature type="binding site" evidence="1">
    <location>
        <position position="205"/>
    </location>
    <ligand>
        <name>substrate</name>
    </ligand>
</feature>
<feature type="binding site" evidence="1">
    <location>
        <begin position="214"/>
        <end position="216"/>
    </location>
    <ligand>
        <name>substrate</name>
    </ligand>
</feature>
<feature type="binding site" evidence="1">
    <location>
        <begin position="279"/>
        <end position="281"/>
    </location>
    <ligand>
        <name>substrate</name>
    </ligand>
</feature>
<feature type="binding site" evidence="1">
    <location>
        <position position="313"/>
    </location>
    <ligand>
        <name>substrate</name>
    </ligand>
</feature>
<feature type="binding site" evidence="1">
    <location>
        <position position="528"/>
    </location>
    <ligand>
        <name>substrate</name>
    </ligand>
</feature>
<feature type="glycosylation site" description="N-linked (GlcNAc...) asparagine" evidence="2">
    <location>
        <position position="29"/>
    </location>
</feature>
<feature type="glycosylation site" description="N-linked (GlcNAc...) asparagine" evidence="2">
    <location>
        <position position="58"/>
    </location>
</feature>
<feature type="glycosylation site" description="N-linked (GlcNAc...) asparagine" evidence="2">
    <location>
        <position position="205"/>
    </location>
</feature>
<feature type="glycosylation site" description="N-linked (GlcNAc...) asparagine" evidence="2">
    <location>
        <position position="331"/>
    </location>
</feature>
<feature type="sequence conflict" description="In Ref. 1; AA sequence." evidence="5" ref="1">
    <original>S</original>
    <variation>G</variation>
    <location>
        <position position="30"/>
    </location>
</feature>
<feature type="sequence conflict" description="In Ref. 1; AA sequence." evidence="5" ref="1">
    <original>K</original>
    <variation>G</variation>
    <location>
        <position position="103"/>
    </location>
</feature>
<feature type="sequence conflict" description="In Ref. 1; AA sequence." evidence="5" ref="1">
    <original>K</original>
    <variation>G</variation>
    <location>
        <position position="111"/>
    </location>
</feature>
<feature type="sequence conflict" description="In Ref. 3; BAA13042." evidence="5" ref="3">
    <original>Q</original>
    <variation>E</variation>
    <location>
        <position position="115"/>
    </location>
</feature>
<feature type="sequence conflict" description="In Ref. 3; BAA13042." evidence="5" ref="3">
    <original>I</original>
    <variation>V</variation>
    <location>
        <position position="224"/>
    </location>
</feature>
<feature type="sequence conflict" description="In Ref. 1; AA sequence." evidence="5" ref="1">
    <original>T</original>
    <variation>R</variation>
    <location>
        <position position="297"/>
    </location>
</feature>
<feature type="sequence conflict" description="In Ref. 3; BAA13042." evidence="5" ref="3">
    <original>A</original>
    <variation>T</variation>
    <location>
        <position position="361"/>
    </location>
</feature>
<feature type="sequence conflict" description="In Ref. 3; BAA13042." evidence="5" ref="3">
    <original>F</original>
    <variation>L</variation>
    <location>
        <position position="426"/>
    </location>
</feature>
<feature type="sequence conflict" description="In Ref. 3; BAA13042." evidence="5" ref="3">
    <original>V</original>
    <variation>I</variation>
    <location>
        <position position="450"/>
    </location>
</feature>
<feature type="sequence conflict" description="In Ref. 3; BAA13042." evidence="5" ref="3">
    <original>V</original>
    <variation>I</variation>
    <location>
        <position position="455"/>
    </location>
</feature>
<feature type="sequence conflict" description="In Ref. 3; BAA13042." evidence="5" ref="3">
    <original>A</original>
    <variation>E</variation>
    <location>
        <position position="563"/>
    </location>
</feature>
<feature type="sequence conflict" description="In Ref. 3; BAA13042." evidence="5" ref="3">
    <original>E</original>
    <variation>K</variation>
    <location>
        <position position="570"/>
    </location>
</feature>
<name>TREA_BOMMO</name>
<keyword id="KW-1003">Cell membrane</keyword>
<keyword id="KW-0903">Direct protein sequencing</keyword>
<keyword id="KW-0325">Glycoprotein</keyword>
<keyword id="KW-0326">Glycosidase</keyword>
<keyword id="KW-0378">Hydrolase</keyword>
<keyword id="KW-0472">Membrane</keyword>
<keyword id="KW-1185">Reference proteome</keyword>
<keyword id="KW-0732">Signal</keyword>
<proteinExistence type="evidence at protein level"/>
<accession>P32358</accession>
<accession>Q27453</accession>
<dbReference type="EC" id="3.2.1.28"/>
<dbReference type="EMBL" id="D13763">
    <property type="protein sequence ID" value="BAA02909.1"/>
    <property type="molecule type" value="mRNA"/>
</dbReference>
<dbReference type="EMBL" id="S73271">
    <property type="protein sequence ID" value="AAC60507.1"/>
    <property type="molecule type" value="mRNA"/>
</dbReference>
<dbReference type="EMBL" id="D86212">
    <property type="protein sequence ID" value="BAA13042.1"/>
    <property type="molecule type" value="Genomic_DNA"/>
</dbReference>
<dbReference type="PIR" id="S33759">
    <property type="entry name" value="S33759"/>
</dbReference>
<dbReference type="RefSeq" id="NP_001037458.1">
    <property type="nucleotide sequence ID" value="NM_001043993.1"/>
</dbReference>
<dbReference type="SMR" id="P32358"/>
<dbReference type="STRING" id="7091.P32358"/>
<dbReference type="BindingDB" id="P32358"/>
<dbReference type="ChEMBL" id="CHEMBL2268008"/>
<dbReference type="CAZy" id="GH37">
    <property type="family name" value="Glycoside Hydrolase Family 37"/>
</dbReference>
<dbReference type="PaxDb" id="7091-BGIBMGA005664-TA"/>
<dbReference type="EnsemblMetazoa" id="NM_001043993.1">
    <property type="protein sequence ID" value="NP_001037458.1"/>
    <property type="gene ID" value="LOC693027"/>
</dbReference>
<dbReference type="GeneID" id="693027"/>
<dbReference type="KEGG" id="bmor:693027"/>
<dbReference type="eggNOG" id="KOG0602">
    <property type="taxonomic scope" value="Eukaryota"/>
</dbReference>
<dbReference type="HOGENOM" id="CLU_006451_4_0_1"/>
<dbReference type="InParanoid" id="P32358"/>
<dbReference type="OrthoDB" id="169183at7088"/>
<dbReference type="BRENDA" id="3.2.1.28">
    <property type="organism ID" value="890"/>
</dbReference>
<dbReference type="Proteomes" id="UP000005204">
    <property type="component" value="Unassembled WGS sequence"/>
</dbReference>
<dbReference type="GO" id="GO:0016323">
    <property type="term" value="C:basolateral plasma membrane"/>
    <property type="evidence" value="ECO:0007669"/>
    <property type="project" value="UniProtKB-SubCell"/>
</dbReference>
<dbReference type="GO" id="GO:0004555">
    <property type="term" value="F:alpha,alpha-trehalase activity"/>
    <property type="evidence" value="ECO:0007669"/>
    <property type="project" value="UniProtKB-EC"/>
</dbReference>
<dbReference type="GO" id="GO:0005993">
    <property type="term" value="P:trehalose catabolic process"/>
    <property type="evidence" value="ECO:0007669"/>
    <property type="project" value="TreeGrafter"/>
</dbReference>
<dbReference type="Gene3D" id="1.50.10.10">
    <property type="match status" value="1"/>
</dbReference>
<dbReference type="InterPro" id="IPR008928">
    <property type="entry name" value="6-hairpin_glycosidase_sf"/>
</dbReference>
<dbReference type="InterPro" id="IPR012341">
    <property type="entry name" value="6hp_glycosidase-like_sf"/>
</dbReference>
<dbReference type="InterPro" id="IPR001661">
    <property type="entry name" value="Glyco_hydro_37"/>
</dbReference>
<dbReference type="InterPro" id="IPR018232">
    <property type="entry name" value="Glyco_hydro_37_CS"/>
</dbReference>
<dbReference type="PANTHER" id="PTHR23403">
    <property type="entry name" value="TREHALASE"/>
    <property type="match status" value="1"/>
</dbReference>
<dbReference type="PANTHER" id="PTHR23403:SF1">
    <property type="entry name" value="TREHALASE"/>
    <property type="match status" value="1"/>
</dbReference>
<dbReference type="Pfam" id="PF01204">
    <property type="entry name" value="Trehalase"/>
    <property type="match status" value="1"/>
</dbReference>
<dbReference type="PRINTS" id="PR00744">
    <property type="entry name" value="GLHYDRLASE37"/>
</dbReference>
<dbReference type="SUPFAM" id="SSF48208">
    <property type="entry name" value="Six-hairpin glycosidases"/>
    <property type="match status" value="1"/>
</dbReference>
<dbReference type="PROSITE" id="PS00927">
    <property type="entry name" value="TREHALASE_1"/>
    <property type="match status" value="1"/>
</dbReference>
<dbReference type="PROSITE" id="PS00928">
    <property type="entry name" value="TREHALASE_2"/>
    <property type="match status" value="1"/>
</dbReference>